<evidence type="ECO:0000255" key="1"/>
<evidence type="ECO:0000255" key="2">
    <source>
        <dbReference type="HAMAP-Rule" id="MF_01260"/>
    </source>
</evidence>
<dbReference type="EC" id="3.1.1.85" evidence="2"/>
<dbReference type="EMBL" id="AL513382">
    <property type="protein sequence ID" value="CAD08105.1"/>
    <property type="molecule type" value="Genomic_DNA"/>
</dbReference>
<dbReference type="EMBL" id="AE014613">
    <property type="protein sequence ID" value="AAO71467.1"/>
    <property type="molecule type" value="Genomic_DNA"/>
</dbReference>
<dbReference type="RefSeq" id="NP_458395.1">
    <property type="nucleotide sequence ID" value="NC_003198.1"/>
</dbReference>
<dbReference type="RefSeq" id="WP_000998145.1">
    <property type="nucleotide sequence ID" value="NZ_WSUR01000001.1"/>
</dbReference>
<dbReference type="SMR" id="Q8Z221"/>
<dbReference type="STRING" id="220341.gene:17588118"/>
<dbReference type="ESTHER" id="salty-BIOH">
    <property type="family name" value="BioH"/>
</dbReference>
<dbReference type="KEGG" id="stt:t3997"/>
<dbReference type="KEGG" id="sty:STY4287"/>
<dbReference type="PATRIC" id="fig|220341.7.peg.4381"/>
<dbReference type="eggNOG" id="COG0596">
    <property type="taxonomic scope" value="Bacteria"/>
</dbReference>
<dbReference type="HOGENOM" id="CLU_020336_12_2_6"/>
<dbReference type="OMA" id="PFISHPQ"/>
<dbReference type="OrthoDB" id="9780744at2"/>
<dbReference type="UniPathway" id="UPA00078"/>
<dbReference type="Proteomes" id="UP000000541">
    <property type="component" value="Chromosome"/>
</dbReference>
<dbReference type="Proteomes" id="UP000002670">
    <property type="component" value="Chromosome"/>
</dbReference>
<dbReference type="GO" id="GO:0005737">
    <property type="term" value="C:cytoplasm"/>
    <property type="evidence" value="ECO:0007669"/>
    <property type="project" value="UniProtKB-SubCell"/>
</dbReference>
<dbReference type="GO" id="GO:0090499">
    <property type="term" value="F:pimelyl-[acyl-carrier protein] methyl ester esterase activity"/>
    <property type="evidence" value="ECO:0007669"/>
    <property type="project" value="UniProtKB-EC"/>
</dbReference>
<dbReference type="GO" id="GO:0009102">
    <property type="term" value="P:biotin biosynthetic process"/>
    <property type="evidence" value="ECO:0007669"/>
    <property type="project" value="UniProtKB-UniRule"/>
</dbReference>
<dbReference type="FunFam" id="3.40.50.1820:FF:000045">
    <property type="entry name" value="Pimeloyl-[acyl-carrier protein] methyl ester esterase"/>
    <property type="match status" value="1"/>
</dbReference>
<dbReference type="Gene3D" id="3.40.50.1820">
    <property type="entry name" value="alpha/beta hydrolase"/>
    <property type="match status" value="1"/>
</dbReference>
<dbReference type="HAMAP" id="MF_01260">
    <property type="entry name" value="Carboxylester"/>
    <property type="match status" value="1"/>
</dbReference>
<dbReference type="InterPro" id="IPR000073">
    <property type="entry name" value="AB_hydrolase_1"/>
</dbReference>
<dbReference type="InterPro" id="IPR029058">
    <property type="entry name" value="AB_hydrolase_fold"/>
</dbReference>
<dbReference type="InterPro" id="IPR010076">
    <property type="entry name" value="BioH"/>
</dbReference>
<dbReference type="InterPro" id="IPR050228">
    <property type="entry name" value="Carboxylesterase_BioH"/>
</dbReference>
<dbReference type="NCBIfam" id="TIGR01738">
    <property type="entry name" value="bioH"/>
    <property type="match status" value="1"/>
</dbReference>
<dbReference type="NCBIfam" id="NF007674">
    <property type="entry name" value="PRK10349.1"/>
    <property type="match status" value="1"/>
</dbReference>
<dbReference type="PANTHER" id="PTHR43194">
    <property type="entry name" value="HYDROLASE ALPHA/BETA FOLD FAMILY"/>
    <property type="match status" value="1"/>
</dbReference>
<dbReference type="PANTHER" id="PTHR43194:SF5">
    <property type="entry name" value="PIMELOYL-[ACYL-CARRIER PROTEIN] METHYL ESTER ESTERASE"/>
    <property type="match status" value="1"/>
</dbReference>
<dbReference type="Pfam" id="PF00561">
    <property type="entry name" value="Abhydrolase_1"/>
    <property type="match status" value="1"/>
</dbReference>
<dbReference type="SUPFAM" id="SSF53474">
    <property type="entry name" value="alpha/beta-Hydrolases"/>
    <property type="match status" value="1"/>
</dbReference>
<feature type="chain" id="PRO_0000204490" description="Pimeloyl-[acyl-carrier protein] methyl ester esterase">
    <location>
        <begin position="1"/>
        <end position="256"/>
    </location>
</feature>
<feature type="domain" description="AB hydrolase-1" evidence="1">
    <location>
        <begin position="15"/>
        <end position="242"/>
    </location>
</feature>
<feature type="active site" description="Nucleophile" evidence="2">
    <location>
        <position position="82"/>
    </location>
</feature>
<feature type="active site" evidence="2">
    <location>
        <position position="207"/>
    </location>
</feature>
<feature type="active site" evidence="2">
    <location>
        <position position="235"/>
    </location>
</feature>
<feature type="binding site" evidence="2">
    <location>
        <position position="22"/>
    </location>
    <ligand>
        <name>substrate</name>
    </ligand>
</feature>
<feature type="binding site" evidence="2">
    <location>
        <begin position="82"/>
        <end position="83"/>
    </location>
    <ligand>
        <name>substrate</name>
    </ligand>
</feature>
<feature type="binding site" evidence="2">
    <location>
        <begin position="143"/>
        <end position="147"/>
    </location>
    <ligand>
        <name>substrate</name>
    </ligand>
</feature>
<feature type="binding site" evidence="2">
    <location>
        <position position="235"/>
    </location>
    <ligand>
        <name>substrate</name>
    </ligand>
</feature>
<reference key="1">
    <citation type="journal article" date="2001" name="Nature">
        <title>Complete genome sequence of a multiple drug resistant Salmonella enterica serovar Typhi CT18.</title>
        <authorList>
            <person name="Parkhill J."/>
            <person name="Dougan G."/>
            <person name="James K.D."/>
            <person name="Thomson N.R."/>
            <person name="Pickard D."/>
            <person name="Wain J."/>
            <person name="Churcher C.M."/>
            <person name="Mungall K.L."/>
            <person name="Bentley S.D."/>
            <person name="Holden M.T.G."/>
            <person name="Sebaihia M."/>
            <person name="Baker S."/>
            <person name="Basham D."/>
            <person name="Brooks K."/>
            <person name="Chillingworth T."/>
            <person name="Connerton P."/>
            <person name="Cronin A."/>
            <person name="Davis P."/>
            <person name="Davies R.M."/>
            <person name="Dowd L."/>
            <person name="White N."/>
            <person name="Farrar J."/>
            <person name="Feltwell T."/>
            <person name="Hamlin N."/>
            <person name="Haque A."/>
            <person name="Hien T.T."/>
            <person name="Holroyd S."/>
            <person name="Jagels K."/>
            <person name="Krogh A."/>
            <person name="Larsen T.S."/>
            <person name="Leather S."/>
            <person name="Moule S."/>
            <person name="O'Gaora P."/>
            <person name="Parry C."/>
            <person name="Quail M.A."/>
            <person name="Rutherford K.M."/>
            <person name="Simmonds M."/>
            <person name="Skelton J."/>
            <person name="Stevens K."/>
            <person name="Whitehead S."/>
            <person name="Barrell B.G."/>
        </authorList>
    </citation>
    <scope>NUCLEOTIDE SEQUENCE [LARGE SCALE GENOMIC DNA]</scope>
    <source>
        <strain>CT18</strain>
    </source>
</reference>
<reference key="2">
    <citation type="journal article" date="2003" name="J. Bacteriol.">
        <title>Comparative genomics of Salmonella enterica serovar Typhi strains Ty2 and CT18.</title>
        <authorList>
            <person name="Deng W."/>
            <person name="Liou S.-R."/>
            <person name="Plunkett G. III"/>
            <person name="Mayhew G.F."/>
            <person name="Rose D.J."/>
            <person name="Burland V."/>
            <person name="Kodoyianni V."/>
            <person name="Schwartz D.C."/>
            <person name="Blattner F.R."/>
        </authorList>
    </citation>
    <scope>NUCLEOTIDE SEQUENCE [LARGE SCALE GENOMIC DNA]</scope>
    <source>
        <strain>ATCC 700931 / Ty2</strain>
    </source>
</reference>
<organism>
    <name type="scientific">Salmonella typhi</name>
    <dbReference type="NCBI Taxonomy" id="90370"/>
    <lineage>
        <taxon>Bacteria</taxon>
        <taxon>Pseudomonadati</taxon>
        <taxon>Pseudomonadota</taxon>
        <taxon>Gammaproteobacteria</taxon>
        <taxon>Enterobacterales</taxon>
        <taxon>Enterobacteriaceae</taxon>
        <taxon>Salmonella</taxon>
    </lineage>
</organism>
<comment type="function">
    <text evidence="2">The physiological role of BioH is to remove the methyl group introduced by BioC when the pimeloyl moiety is complete. It allows to synthesize pimeloyl-ACP via the fatty acid synthetic pathway through the hydrolysis of the ester bonds of pimeloyl-ACP esters.</text>
</comment>
<comment type="catalytic activity">
    <reaction evidence="2">
        <text>6-carboxyhexanoyl-[ACP] methyl ester + H2O = 6-carboxyhexanoyl-[ACP] + methanol + H(+)</text>
        <dbReference type="Rhea" id="RHEA:42700"/>
        <dbReference type="Rhea" id="RHEA-COMP:9955"/>
        <dbReference type="Rhea" id="RHEA-COMP:10186"/>
        <dbReference type="ChEBI" id="CHEBI:15377"/>
        <dbReference type="ChEBI" id="CHEBI:15378"/>
        <dbReference type="ChEBI" id="CHEBI:17790"/>
        <dbReference type="ChEBI" id="CHEBI:78846"/>
        <dbReference type="ChEBI" id="CHEBI:82735"/>
        <dbReference type="EC" id="3.1.1.85"/>
    </reaction>
</comment>
<comment type="pathway">
    <text evidence="2">Cofactor biosynthesis; biotin biosynthesis.</text>
</comment>
<comment type="subunit">
    <text evidence="2">Monomer.</text>
</comment>
<comment type="subcellular location">
    <subcellularLocation>
        <location evidence="2">Cytoplasm</location>
    </subcellularLocation>
</comment>
<comment type="similarity">
    <text evidence="2">Belongs to the AB hydrolase superfamily. Carboxylesterase BioH family.</text>
</comment>
<sequence>MNDIWWQTYGEGNCHLVLLHGWGLNAEVWHCIREELGSHFTLHLVDLPGYGRSSGFGAMTLEEMTAQVAKNAPDQAIWLGWSLGGLVASQMALTHPERVQALVTVASSPCFSAREGWPGIKPEILGGFQQQLSDDFQRTVERFLALQTLGTETARQDARTLKSVVLAQPMPDVEVLNGGLEILKTVDLREALKNVNMPFLRLYGYLDGLVPRKIAPLLDTLWPHSTSQIMAKAAHAPFISHPAAFCQALMTLKSSL</sequence>
<protein>
    <recommendedName>
        <fullName evidence="2">Pimeloyl-[acyl-carrier protein] methyl ester esterase</fullName>
        <ecNumber evidence="2">3.1.1.85</ecNumber>
    </recommendedName>
    <alternativeName>
        <fullName evidence="2">Biotin synthesis protein BioH</fullName>
    </alternativeName>
    <alternativeName>
        <fullName evidence="2">Carboxylesterase BioH</fullName>
    </alternativeName>
</protein>
<proteinExistence type="inferred from homology"/>
<keyword id="KW-0093">Biotin biosynthesis</keyword>
<keyword id="KW-0963">Cytoplasm</keyword>
<keyword id="KW-0378">Hydrolase</keyword>
<keyword id="KW-0719">Serine esterase</keyword>
<name>BIOH_SALTI</name>
<gene>
    <name evidence="2" type="primary">bioH</name>
    <name type="ordered locus">STY4287</name>
    <name type="ordered locus">t3997</name>
</gene>
<accession>Q8Z221</accession>
<accession>Q7C5V9</accession>